<comment type="function">
    <text evidence="1">Destroys radicals which are normally produced within the cells and which are toxic to biological systems.</text>
</comment>
<comment type="catalytic activity">
    <reaction evidence="3">
        <text>2 superoxide + 2 H(+) = H2O2 + O2</text>
        <dbReference type="Rhea" id="RHEA:20696"/>
        <dbReference type="ChEBI" id="CHEBI:15378"/>
        <dbReference type="ChEBI" id="CHEBI:15379"/>
        <dbReference type="ChEBI" id="CHEBI:16240"/>
        <dbReference type="ChEBI" id="CHEBI:18421"/>
        <dbReference type="EC" id="1.15.1.1"/>
    </reaction>
</comment>
<comment type="cofactor">
    <cofactor evidence="2">
        <name>Cu cation</name>
        <dbReference type="ChEBI" id="CHEBI:23378"/>
    </cofactor>
    <text evidence="2">Binds 1 copper ion per subunit.</text>
</comment>
<comment type="cofactor">
    <cofactor evidence="2">
        <name>Zn(2+)</name>
        <dbReference type="ChEBI" id="CHEBI:29105"/>
    </cofactor>
    <text evidence="2">Binds 1 zinc ion per subunit.</text>
</comment>
<comment type="subunit">
    <text evidence="3">Homodimer.</text>
</comment>
<comment type="subcellular location">
    <subcellularLocation>
        <location evidence="2">Cytoplasm</location>
    </subcellularLocation>
</comment>
<comment type="similarity">
    <text evidence="4">Belongs to the Cu-Zn superoxide dismutase family.</text>
</comment>
<protein>
    <recommendedName>
        <fullName>Superoxide dismutase [Cu-Zn]</fullName>
        <ecNumber evidence="3">1.15.1.1</ecNumber>
    </recommendedName>
</protein>
<name>SODC_PODAS</name>
<proteinExistence type="inferred from homology"/>
<keyword id="KW-0049">Antioxidant</keyword>
<keyword id="KW-0186">Copper</keyword>
<keyword id="KW-0963">Cytoplasm</keyword>
<keyword id="KW-1015">Disulfide bond</keyword>
<keyword id="KW-0479">Metal-binding</keyword>
<keyword id="KW-0560">Oxidoreductase</keyword>
<keyword id="KW-0862">Zinc</keyword>
<gene>
    <name type="primary">SOD1</name>
</gene>
<organism>
    <name type="scientific">Podospora anserina</name>
    <name type="common">Pleurage anserina</name>
    <dbReference type="NCBI Taxonomy" id="2587412"/>
    <lineage>
        <taxon>Eukaryota</taxon>
        <taxon>Fungi</taxon>
        <taxon>Dikarya</taxon>
        <taxon>Ascomycota</taxon>
        <taxon>Pezizomycotina</taxon>
        <taxon>Sordariomycetes</taxon>
        <taxon>Sordariomycetidae</taxon>
        <taxon>Sordariales</taxon>
        <taxon>Podosporaceae</taxon>
        <taxon>Podospora</taxon>
    </lineage>
</organism>
<reference key="1">
    <citation type="submission" date="2001-01" db="EMBL/GenBank/DDBJ databases">
        <title>Alteration of copper availability in long-lived mutants of Podospora anserina.</title>
        <authorList>
            <person name="Borghouts C."/>
            <person name="Werner A."/>
            <person name="Osiewacz H.D."/>
        </authorList>
    </citation>
    <scope>NUCLEOTIDE SEQUENCE [GENOMIC DNA]</scope>
    <source>
        <strain>s</strain>
    </source>
</reference>
<accession>Q711T9</accession>
<dbReference type="EC" id="1.15.1.1" evidence="3"/>
<dbReference type="EMBL" id="AJ305146">
    <property type="protein sequence ID" value="CAC83677.1"/>
    <property type="molecule type" value="Genomic_DNA"/>
</dbReference>
<dbReference type="SMR" id="Q711T9"/>
<dbReference type="VEuPathDB" id="FungiDB:PODANS_1_17400"/>
<dbReference type="GO" id="GO:0005737">
    <property type="term" value="C:cytoplasm"/>
    <property type="evidence" value="ECO:0007669"/>
    <property type="project" value="UniProtKB-SubCell"/>
</dbReference>
<dbReference type="GO" id="GO:0005507">
    <property type="term" value="F:copper ion binding"/>
    <property type="evidence" value="ECO:0007669"/>
    <property type="project" value="InterPro"/>
</dbReference>
<dbReference type="GO" id="GO:0004784">
    <property type="term" value="F:superoxide dismutase activity"/>
    <property type="evidence" value="ECO:0007669"/>
    <property type="project" value="UniProtKB-EC"/>
</dbReference>
<dbReference type="CDD" id="cd00305">
    <property type="entry name" value="Cu-Zn_Superoxide_Dismutase"/>
    <property type="match status" value="1"/>
</dbReference>
<dbReference type="FunFam" id="2.60.40.200:FF:000001">
    <property type="entry name" value="Superoxide dismutase [Cu-Zn]"/>
    <property type="match status" value="1"/>
</dbReference>
<dbReference type="Gene3D" id="2.60.40.200">
    <property type="entry name" value="Superoxide dismutase, copper/zinc binding domain"/>
    <property type="match status" value="1"/>
</dbReference>
<dbReference type="InterPro" id="IPR036423">
    <property type="entry name" value="SOD-like_Cu/Zn_dom_sf"/>
</dbReference>
<dbReference type="InterPro" id="IPR024134">
    <property type="entry name" value="SOD_Cu/Zn_/chaperone"/>
</dbReference>
<dbReference type="InterPro" id="IPR018152">
    <property type="entry name" value="SOD_Cu/Zn_BS"/>
</dbReference>
<dbReference type="InterPro" id="IPR001424">
    <property type="entry name" value="SOD_Cu_Zn_dom"/>
</dbReference>
<dbReference type="PANTHER" id="PTHR10003">
    <property type="entry name" value="SUPEROXIDE DISMUTASE CU-ZN -RELATED"/>
    <property type="match status" value="1"/>
</dbReference>
<dbReference type="Pfam" id="PF00080">
    <property type="entry name" value="Sod_Cu"/>
    <property type="match status" value="1"/>
</dbReference>
<dbReference type="PRINTS" id="PR00068">
    <property type="entry name" value="CUZNDISMTASE"/>
</dbReference>
<dbReference type="SUPFAM" id="SSF49329">
    <property type="entry name" value="Cu,Zn superoxide dismutase-like"/>
    <property type="match status" value="1"/>
</dbReference>
<dbReference type="PROSITE" id="PS00087">
    <property type="entry name" value="SOD_CU_ZN_1"/>
    <property type="match status" value="1"/>
</dbReference>
<dbReference type="PROSITE" id="PS00332">
    <property type="entry name" value="SOD_CU_ZN_2"/>
    <property type="match status" value="1"/>
</dbReference>
<evidence type="ECO:0000250" key="1">
    <source>
        <dbReference type="UniProtKB" id="P00442"/>
    </source>
</evidence>
<evidence type="ECO:0000250" key="2">
    <source>
        <dbReference type="UniProtKB" id="P00445"/>
    </source>
</evidence>
<evidence type="ECO:0000250" key="3">
    <source>
        <dbReference type="UniProtKB" id="P85978"/>
    </source>
</evidence>
<evidence type="ECO:0000305" key="4"/>
<feature type="initiator methionine" description="Removed" evidence="2">
    <location>
        <position position="1"/>
    </location>
</feature>
<feature type="chain" id="PRO_0000164126" description="Superoxide dismutase [Cu-Zn]">
    <location>
        <begin position="2"/>
        <end position="154"/>
    </location>
</feature>
<feature type="binding site" evidence="2">
    <location>
        <position position="47"/>
    </location>
    <ligand>
        <name>Cu cation</name>
        <dbReference type="ChEBI" id="CHEBI:23378"/>
        <note>catalytic</note>
    </ligand>
</feature>
<feature type="binding site" evidence="2">
    <location>
        <position position="49"/>
    </location>
    <ligand>
        <name>Cu cation</name>
        <dbReference type="ChEBI" id="CHEBI:23378"/>
        <note>catalytic</note>
    </ligand>
</feature>
<feature type="binding site" evidence="2">
    <location>
        <position position="64"/>
    </location>
    <ligand>
        <name>Cu cation</name>
        <dbReference type="ChEBI" id="CHEBI:23378"/>
        <note>catalytic</note>
    </ligand>
</feature>
<feature type="binding site" evidence="2">
    <location>
        <position position="64"/>
    </location>
    <ligand>
        <name>Zn(2+)</name>
        <dbReference type="ChEBI" id="CHEBI:29105"/>
        <note>structural</note>
    </ligand>
</feature>
<feature type="binding site" evidence="2">
    <location>
        <position position="72"/>
    </location>
    <ligand>
        <name>Zn(2+)</name>
        <dbReference type="ChEBI" id="CHEBI:29105"/>
        <note>structural</note>
    </ligand>
</feature>
<feature type="binding site" evidence="2">
    <location>
        <position position="81"/>
    </location>
    <ligand>
        <name>Zn(2+)</name>
        <dbReference type="ChEBI" id="CHEBI:29105"/>
        <note>structural</note>
    </ligand>
</feature>
<feature type="binding site" evidence="2">
    <location>
        <position position="84"/>
    </location>
    <ligand>
        <name>Zn(2+)</name>
        <dbReference type="ChEBI" id="CHEBI:29105"/>
        <note>structural</note>
    </ligand>
</feature>
<feature type="binding site" evidence="2">
    <location>
        <position position="121"/>
    </location>
    <ligand>
        <name>Cu cation</name>
        <dbReference type="ChEBI" id="CHEBI:23378"/>
        <note>catalytic</note>
    </ligand>
</feature>
<feature type="binding site" evidence="2">
    <location>
        <position position="144"/>
    </location>
    <ligand>
        <name>substrate</name>
    </ligand>
</feature>
<feature type="disulfide bond" evidence="2">
    <location>
        <begin position="58"/>
        <end position="147"/>
    </location>
</feature>
<sequence>MVKAVAVVRGDSKVSGSVVFEQETENGPTTITWDITGHDANAKRGMHIHTFGDNTNGCTSAGPHFNPHGKTHGNRTDENRHVGDLGNIETDAQGNSKGTVTDNLIKLIGPESVIGRTVVVHAGTDDLGKGDTEESLKTGNAGARPACGVIGISA</sequence>